<gene>
    <name type="primary">MRAP</name>
    <name type="synonym">FALP</name>
</gene>
<protein>
    <recommendedName>
        <fullName>Melanocortin-2 receptor accessory protein</fullName>
    </recommendedName>
    <alternativeName>
        <fullName>Fat cell-specific low molecular weight protein</fullName>
    </alternativeName>
    <alternativeName>
        <fullName>Fat tissue-specific low MW protein</fullName>
    </alternativeName>
</protein>
<dbReference type="EMBL" id="AL954205">
    <property type="protein sequence ID" value="CAH18577.1"/>
    <property type="molecule type" value="Genomic_DNA"/>
</dbReference>
<dbReference type="EMBL" id="AL954205">
    <property type="protein sequence ID" value="CAH18578.1"/>
    <property type="molecule type" value="Genomic_DNA"/>
</dbReference>
<dbReference type="RefSeq" id="NP_001065291.2">
    <property type="nucleotide sequence ID" value="NM_001071823.1"/>
</dbReference>
<dbReference type="SMR" id="Q68UT4"/>
<dbReference type="FunCoup" id="Q68UT4">
    <property type="interactions" value="23"/>
</dbReference>
<dbReference type="STRING" id="9598.ENSPTRP00000055057"/>
<dbReference type="PaxDb" id="9598-ENSPTRP00000055057"/>
<dbReference type="GeneID" id="746245"/>
<dbReference type="CTD" id="56246"/>
<dbReference type="eggNOG" id="ENOG502SB3E">
    <property type="taxonomic scope" value="Eukaryota"/>
</dbReference>
<dbReference type="HOGENOM" id="CLU_133578_0_0_1"/>
<dbReference type="InParanoid" id="Q68UT4"/>
<dbReference type="Proteomes" id="UP000002277">
    <property type="component" value="Unplaced"/>
</dbReference>
<dbReference type="Proteomes" id="UP000243858">
    <property type="component" value="Chromosome 22"/>
</dbReference>
<dbReference type="GO" id="GO:0005783">
    <property type="term" value="C:endoplasmic reticulum"/>
    <property type="evidence" value="ECO:0000318"/>
    <property type="project" value="GO_Central"/>
</dbReference>
<dbReference type="GO" id="GO:0005789">
    <property type="term" value="C:endoplasmic reticulum membrane"/>
    <property type="evidence" value="ECO:0007669"/>
    <property type="project" value="UniProtKB-SubCell"/>
</dbReference>
<dbReference type="GO" id="GO:0005886">
    <property type="term" value="C:plasma membrane"/>
    <property type="evidence" value="ECO:0000318"/>
    <property type="project" value="GO_Central"/>
</dbReference>
<dbReference type="GO" id="GO:0031780">
    <property type="term" value="F:corticotropin hormone receptor binding"/>
    <property type="evidence" value="ECO:0000318"/>
    <property type="project" value="GO_Central"/>
</dbReference>
<dbReference type="GO" id="GO:0030545">
    <property type="term" value="F:signaling receptor regulator activity"/>
    <property type="evidence" value="ECO:0000318"/>
    <property type="project" value="GO_Central"/>
</dbReference>
<dbReference type="GO" id="GO:0070996">
    <property type="term" value="F:type 1 melanocortin receptor binding"/>
    <property type="evidence" value="ECO:0000318"/>
    <property type="project" value="GO_Central"/>
</dbReference>
<dbReference type="GO" id="GO:0031781">
    <property type="term" value="F:type 3 melanocortin receptor binding"/>
    <property type="evidence" value="ECO:0000318"/>
    <property type="project" value="GO_Central"/>
</dbReference>
<dbReference type="GO" id="GO:0031782">
    <property type="term" value="F:type 4 melanocortin receptor binding"/>
    <property type="evidence" value="ECO:0000318"/>
    <property type="project" value="GO_Central"/>
</dbReference>
<dbReference type="GO" id="GO:0031783">
    <property type="term" value="F:type 5 melanocortin receptor binding"/>
    <property type="evidence" value="ECO:0000318"/>
    <property type="project" value="GO_Central"/>
</dbReference>
<dbReference type="GO" id="GO:0072659">
    <property type="term" value="P:protein localization to plasma membrane"/>
    <property type="evidence" value="ECO:0000318"/>
    <property type="project" value="GO_Central"/>
</dbReference>
<dbReference type="GO" id="GO:0106070">
    <property type="term" value="P:regulation of adenylate cyclase-activating G protein-coupled receptor signaling pathway"/>
    <property type="evidence" value="ECO:0000318"/>
    <property type="project" value="GO_Central"/>
</dbReference>
<dbReference type="InterPro" id="IPR028111">
    <property type="entry name" value="MRAP"/>
</dbReference>
<dbReference type="PANTHER" id="PTHR28675:SF2">
    <property type="entry name" value="MELANOCORTIN-2 RECEPTOR ACCESSORY PROTEIN"/>
    <property type="match status" value="1"/>
</dbReference>
<dbReference type="PANTHER" id="PTHR28675">
    <property type="entry name" value="MELANOCORTIN-2 RECEPTOR ACCESSORY PROTEIN 2"/>
    <property type="match status" value="1"/>
</dbReference>
<dbReference type="Pfam" id="PF15183">
    <property type="entry name" value="MRAP"/>
    <property type="match status" value="1"/>
</dbReference>
<sequence>MANGTNASAPYYSYEYYLDYLDLIPVDEKKLKAHKHSIVIAFWVSLAAFVVLLFLILLYMSWSGSPQMRNSPKHHQTCPWSHGLNLHLCIQKCLPCHREPLATSQAQASSVEPGSRTGPDQPLRQESSSTLPLGVFQTHPTLLWELTLNGGPLVRSKPSEPPPGDRTSQLQS</sequence>
<proteinExistence type="inferred from homology"/>
<reference key="1">
    <citation type="journal article" date="2004" name="Nature">
        <title>DNA sequence and comparative analysis of chimpanzee chromosome 22.</title>
        <authorList>
            <person name="Watanabe H."/>
            <person name="Fujiyama A."/>
            <person name="Hattori M."/>
            <person name="Taylor T.D."/>
            <person name="Toyoda A."/>
            <person name="Kuroki Y."/>
            <person name="Noguchi H."/>
            <person name="BenKahla A."/>
            <person name="Lehrach H."/>
            <person name="Sudbrak R."/>
            <person name="Kube M."/>
            <person name="Taenzer S."/>
            <person name="Galgoczy P."/>
            <person name="Platzer M."/>
            <person name="Scharfe M."/>
            <person name="Nordsiek G."/>
            <person name="Bloecker H."/>
            <person name="Hellmann I."/>
            <person name="Khaitovich P."/>
            <person name="Paeaebo S."/>
            <person name="Reinhardt R."/>
            <person name="Zheng H.-J."/>
            <person name="Zhang X.-L."/>
            <person name="Zhu G.-F."/>
            <person name="Wang B.-F."/>
            <person name="Fu G."/>
            <person name="Ren S.-X."/>
            <person name="Zhao G.-P."/>
            <person name="Chen Z."/>
            <person name="Lee Y.-S."/>
            <person name="Cheong J.-E."/>
            <person name="Choi S.-H."/>
            <person name="Wu K.-M."/>
            <person name="Liu T.-T."/>
            <person name="Hsiao K.-J."/>
            <person name="Tsai S.-F."/>
            <person name="Kim C.-G."/>
            <person name="Oota S."/>
            <person name="Kitano T."/>
            <person name="Kohara Y."/>
            <person name="Saitou N."/>
            <person name="Park H.-S."/>
            <person name="Wang S.-Y."/>
            <person name="Yaspo M.-L."/>
            <person name="Sakaki Y."/>
        </authorList>
    </citation>
    <scope>NUCLEOTIDE SEQUENCE [LARGE SCALE GENOMIC DNA]</scope>
</reference>
<name>MRAP_PANTR</name>
<feature type="chain" id="PRO_0000096572" description="Melanocortin-2 receptor accessory protein">
    <location>
        <begin position="1"/>
        <end position="172"/>
    </location>
</feature>
<feature type="transmembrane region" description="Helical" evidence="2">
    <location>
        <begin position="38"/>
        <end position="58"/>
    </location>
</feature>
<feature type="region of interest" description="Disordered" evidence="3">
    <location>
        <begin position="105"/>
        <end position="130"/>
    </location>
</feature>
<feature type="region of interest" description="Disordered" evidence="3">
    <location>
        <begin position="152"/>
        <end position="172"/>
    </location>
</feature>
<feature type="splice variant" id="VSP_011938" description="In isoform 2." evidence="4">
    <location>
        <begin position="1"/>
        <end position="59"/>
    </location>
</feature>
<accession>Q68UT4</accession>
<accession>Q68UT3</accession>
<evidence type="ECO:0000250" key="1"/>
<evidence type="ECO:0000255" key="2"/>
<evidence type="ECO:0000256" key="3">
    <source>
        <dbReference type="SAM" id="MobiDB-lite"/>
    </source>
</evidence>
<evidence type="ECO:0000305" key="4"/>
<organism>
    <name type="scientific">Pan troglodytes</name>
    <name type="common">Chimpanzee</name>
    <dbReference type="NCBI Taxonomy" id="9598"/>
    <lineage>
        <taxon>Eukaryota</taxon>
        <taxon>Metazoa</taxon>
        <taxon>Chordata</taxon>
        <taxon>Craniata</taxon>
        <taxon>Vertebrata</taxon>
        <taxon>Euteleostomi</taxon>
        <taxon>Mammalia</taxon>
        <taxon>Eutheria</taxon>
        <taxon>Euarchontoglires</taxon>
        <taxon>Primates</taxon>
        <taxon>Haplorrhini</taxon>
        <taxon>Catarrhini</taxon>
        <taxon>Hominidae</taxon>
        <taxon>Pan</taxon>
    </lineage>
</organism>
<comment type="function">
    <text evidence="1">Modulator of melanocortin receptors (MC1R, MC2R, MC3R, MC4R and MC5R). Acts by increasing ligand-sensitivity of melanocortin receptors and enhancing generation of cAMP by the receptors. Required both for MC2R trafficking to the cell surface of adrenal cells and for signaling in response to corticotropin (ACTH). May be involved in the intracellular trafficking pathways in adipocyte cells (By similarity).</text>
</comment>
<comment type="subunit">
    <text evidence="1">Homodimer and heterodimer. Forms antiparallel homodimers and heterodimers with MRAP2. Interacts with MC1R, MC2R, MC3R, MC4R and MC5R (By similarity).</text>
</comment>
<comment type="subcellular location">
    <subcellularLocation>
        <location evidence="1">Cell membrane</location>
        <topology evidence="1">Single-pass membrane protein</topology>
    </subcellularLocation>
    <subcellularLocation>
        <location evidence="1">Endoplasmic reticulum membrane</location>
        <topology evidence="1">Single-pass membrane protein</topology>
    </subcellularLocation>
    <text evidence="1">The formation of antiparallel homo- and heterodimers suggest that N- and C-terminus can both localize in the cytoplasmic and extracellular parts, depending on the context. Upon insulin stimulation, it is redistributed into spotty structures throughout the cytoplasm (By similarity).</text>
</comment>
<comment type="alternative products">
    <event type="alternative splicing"/>
    <isoform>
        <id>Q68UT4-1</id>
        <name>1</name>
        <sequence type="displayed"/>
    </isoform>
    <isoform>
        <id>Q68UT4-2</id>
        <name>2</name>
        <sequence type="described" ref="VSP_011938"/>
    </isoform>
</comment>
<comment type="similarity">
    <text evidence="4">Belongs to the MRAP family.</text>
</comment>
<keyword id="KW-0025">Alternative splicing</keyword>
<keyword id="KW-1003">Cell membrane</keyword>
<keyword id="KW-0256">Endoplasmic reticulum</keyword>
<keyword id="KW-0472">Membrane</keyword>
<keyword id="KW-1185">Reference proteome</keyword>
<keyword id="KW-0812">Transmembrane</keyword>
<keyword id="KW-1133">Transmembrane helix</keyword>